<sequence length="715" mass="77501">MPAESGKRFKPSKYVPVSAAAIFLVGATTLFFAFTCPGLSLNVSPAVPIYNAIMFLFVLANFSMATFMDPGIFPRAEEDEDKEDDFRAPLYKTVEIKGIQVRMKWCATCRFYRPPRCSHCSVCDNCVEEFDHHCPWVNNCIGRRNYRYFFLFLLSLTAHIMGVFGFGLLYVLYHIEELSGVRTAVTMAVMCVAGLFFIPVAGLTGFHVVLVARGRTTNEQVTGKFRGGVNPFTNGCCNNVSRVLCSSPAPRYLGRPKKEKTIVIRPPFLRPEVSDGQITVKIMDNGIQGELRRTKSKGSLEITESQSADAEPPPPPKPDLSRYTGLRTHLSLATNEDSSLLGKDSPPTPTMYKYRPGYSSSSTSAAMPHSSSAKLSRGDSLKEPTSIADSSRHPSYRSEPSLEPESFRSPTFGKSFHFDPLSSGSRSSSLKSAQGTGFELGQLQSIRSEGTTSTSYKSLANQTRNGSLSYDSLLTPSDSPDFESVQAGPEPDPPLGYTSPFLSARLAQQREAERHPRLLPTGPPHREPSPVRYDNLSRHIVASLQEREKLLRQSPPLAGREEEPGLGDSGIQSTPGSGHAPRTSSSSDDSKRSPLSKTPLGRPAVPRFGKPDGLRSRGLGSPEPGTTAPYLGRSISYSSQKAPSGVSETEEVALQPLLTPKDEVQLKTTYSKSNGQPKSIGSASPGPGQPPLSSPTRGGVKKVSGVGGTTYEISV</sequence>
<proteinExistence type="evidence at protein level"/>
<feature type="chain" id="PRO_0000212869" description="Palmitoyltransferase ZDHHC5">
    <location>
        <begin position="1"/>
        <end position="715"/>
    </location>
</feature>
<feature type="topological domain" description="Cytoplasmic" evidence="4">
    <location>
        <begin position="1"/>
        <end position="13"/>
    </location>
</feature>
<feature type="transmembrane region" description="Helical" evidence="4">
    <location>
        <begin position="14"/>
        <end position="34"/>
    </location>
</feature>
<feature type="topological domain" description="Extracellular" evidence="4">
    <location>
        <begin position="35"/>
        <end position="52"/>
    </location>
</feature>
<feature type="transmembrane region" description="Helical" evidence="4">
    <location>
        <begin position="53"/>
        <end position="73"/>
    </location>
</feature>
<feature type="topological domain" description="Cytoplasmic" evidence="4">
    <location>
        <begin position="74"/>
        <end position="148"/>
    </location>
</feature>
<feature type="transmembrane region" description="Helical" evidence="4">
    <location>
        <begin position="149"/>
        <end position="169"/>
    </location>
</feature>
<feature type="topological domain" description="Extracellular" evidence="4">
    <location>
        <begin position="170"/>
        <end position="191"/>
    </location>
</feature>
<feature type="transmembrane region" description="Helical" evidence="4">
    <location>
        <begin position="192"/>
        <end position="212"/>
    </location>
</feature>
<feature type="topological domain" description="Cytoplasmic" evidence="4">
    <location>
        <begin position="213"/>
        <end position="715"/>
    </location>
</feature>
<feature type="domain" description="DHHC" evidence="5">
    <location>
        <begin position="104"/>
        <end position="154"/>
    </location>
</feature>
<feature type="region of interest" description="Disordered" evidence="6">
    <location>
        <begin position="289"/>
        <end position="715"/>
    </location>
</feature>
<feature type="compositionally biased region" description="Low complexity" evidence="6">
    <location>
        <begin position="359"/>
        <end position="373"/>
    </location>
</feature>
<feature type="compositionally biased region" description="Low complexity" evidence="6">
    <location>
        <begin position="422"/>
        <end position="432"/>
    </location>
</feature>
<feature type="compositionally biased region" description="Polar residues" evidence="6">
    <location>
        <begin position="442"/>
        <end position="478"/>
    </location>
</feature>
<feature type="compositionally biased region" description="Low complexity" evidence="6">
    <location>
        <begin position="581"/>
        <end position="597"/>
    </location>
</feature>
<feature type="compositionally biased region" description="Polar residues" evidence="6">
    <location>
        <begin position="666"/>
        <end position="677"/>
    </location>
</feature>
<feature type="active site" description="S-palmitoyl cysteine intermediate" evidence="16">
    <location>
        <position position="134"/>
    </location>
</feature>
<feature type="modified residue" description="Phosphotyrosine" evidence="18">
    <location>
        <position position="91"/>
    </location>
</feature>
<feature type="modified residue" description="Phosphoserine" evidence="3">
    <location>
        <position position="247"/>
    </location>
</feature>
<feature type="modified residue" description="Phosphothreonine" evidence="20">
    <location>
        <position position="294"/>
    </location>
</feature>
<feature type="modified residue" description="Phosphoserine" evidence="17 19 20">
    <location>
        <position position="296"/>
    </location>
</feature>
<feature type="modified residue" description="Phosphoserine" evidence="17 19 20">
    <location>
        <position position="299"/>
    </location>
</feature>
<feature type="modified residue" description="Phosphothreonine" evidence="20">
    <location>
        <position position="303"/>
    </location>
</feature>
<feature type="modified residue" description="Phosphoserine" evidence="17 20">
    <location>
        <position position="345"/>
    </location>
</feature>
<feature type="modified residue" description="Phosphothreonine" evidence="20">
    <location>
        <position position="348"/>
    </location>
</feature>
<feature type="modified residue" description="Phosphothreonine" evidence="20">
    <location>
        <position position="350"/>
    </location>
</feature>
<feature type="modified residue" description="Phosphoserine" evidence="19 20">
    <location>
        <position position="380"/>
    </location>
</feature>
<feature type="modified residue" description="Phosphoserine" evidence="3">
    <location>
        <position position="398"/>
    </location>
</feature>
<feature type="modified residue" description="Phosphoserine" evidence="3">
    <location>
        <position position="406"/>
    </location>
</feature>
<feature type="modified residue" description="Phosphoserine" evidence="3">
    <location>
        <position position="409"/>
    </location>
</feature>
<feature type="modified residue" description="Phosphothreonine" evidence="3">
    <location>
        <position position="411"/>
    </location>
</feature>
<feature type="modified residue" description="Phosphoserine" evidence="3">
    <location>
        <position position="415"/>
    </location>
</feature>
<feature type="modified residue" description="Phosphoserine" evidence="3">
    <location>
        <position position="425"/>
    </location>
</feature>
<feature type="modified residue" description="Phosphoserine" evidence="20">
    <location>
        <position position="429"/>
    </location>
</feature>
<feature type="modified residue" description="Phosphoserine" evidence="20">
    <location>
        <position position="432"/>
    </location>
</feature>
<feature type="modified residue" description="Phosphothreonine" evidence="20">
    <location>
        <position position="436"/>
    </location>
</feature>
<feature type="modified residue" description="Phosphoserine" evidence="3">
    <location>
        <position position="529"/>
    </location>
</feature>
<feature type="modified residue" description="Phosphoserine" evidence="3">
    <location>
        <position position="554"/>
    </location>
</feature>
<feature type="modified residue" description="Omega-N-methylarginine" evidence="3">
    <location>
        <position position="617"/>
    </location>
</feature>
<feature type="modified residue" description="Phosphoserine" evidence="19 20">
    <location>
        <position position="621"/>
    </location>
</feature>
<feature type="modified residue" description="Phosphothreonine" evidence="3">
    <location>
        <position position="659"/>
    </location>
</feature>
<feature type="modified residue" description="Phosphoserine" evidence="3">
    <location>
        <position position="684"/>
    </location>
</feature>
<feature type="modified residue" description="Phosphoserine" evidence="3">
    <location>
        <position position="694"/>
    </location>
</feature>
<feature type="modified residue" description="Omega-N-methylarginine" evidence="21">
    <location>
        <position position="697"/>
    </location>
</feature>
<feature type="splice variant" id="VSP_006936" description="In isoform 2." evidence="14">
    <original>KAPSGVSETEEV</original>
    <variation>NPHLVSQRQRK</variation>
    <location>
        <begin position="641"/>
        <end position="652"/>
    </location>
</feature>
<feature type="splice variant" id="VSP_006937" description="In isoform 2." evidence="14">
    <location>
        <begin position="653"/>
        <end position="715"/>
    </location>
</feature>
<feature type="mutagenesis site" description="Loss of palmitoyltransferase activity." evidence="9">
    <original>C</original>
    <variation>S</variation>
    <location>
        <position position="134"/>
    </location>
</feature>
<name>ZDHC5_MOUSE</name>
<keyword id="KW-0012">Acyltransferase</keyword>
<keyword id="KW-0025">Alternative splicing</keyword>
<keyword id="KW-1003">Cell membrane</keyword>
<keyword id="KW-0391">Immunity</keyword>
<keyword id="KW-0399">Innate immunity</keyword>
<keyword id="KW-0445">Lipid transport</keyword>
<keyword id="KW-0449">Lipoprotein</keyword>
<keyword id="KW-0472">Membrane</keyword>
<keyword id="KW-0488">Methylation</keyword>
<keyword id="KW-0564">Palmitate</keyword>
<keyword id="KW-0597">Phosphoprotein</keyword>
<keyword id="KW-1185">Reference proteome</keyword>
<keyword id="KW-0808">Transferase</keyword>
<keyword id="KW-0812">Transmembrane</keyword>
<keyword id="KW-1133">Transmembrane helix</keyword>
<keyword id="KW-0813">Transport</keyword>
<comment type="function">
    <text evidence="3 8 9 10 11 12 13">Palmitoyltransferase that catalyzes the addition of palmitate onto various protein substrates such as CTNND2, CD36, GSDMD, NLRP3, NOD1, NOD2, STAT3 and S1PR1 thus plays a role in various biological processes including cell adhesion, inflammation, fatty acid uptake, bacterial sensing or cardiac functions (PubMed:21820437, PubMed:22081607, PubMed:38530158). Plays an important role in the regulation of synapse efficacy by mediating palmitoylation of delta-catenin/CTNND2, thereby increasing synaptic delivery and surface stabilization of alpha-amino-3-hydroxy-5-methyl-4-isoxazole propionic acid receptors (AMPARs) (PubMed:24562000). Under basal conditions, remains at the synaptic membrane through FYN-mediated phosphorylation that prevents association with endocytic proteins (By similarity). Neuronal activity enhances the internalization and trafficking of DHHC5 from spines to dendritic shafts where it palmitoylates delta-catenin/CTNND2 (By similarity). Regulates cell adhesion at the plasma membrane by palmitoylating GOLGA7B and DSG2 (By similarity). Plays a role in innate immune response by mediating the palmitoylation of NOD1 and NOD2 and their proper recruitment to the bacterial entry site and phagosomes (By similarity). Also participates in fatty acid uptake by palmitoylating CD36 and thereby targeting it to the plasma membrane (PubMed:30605677). Upon binding of fatty acids to CD36, gets phosphorylated by LYN leading to inactivation and subsequent CD36 caveolar endocytosis (PubMed:30605677). Controls oligodendrocyte development by catalyzing STAT3 palmitoylation (PubMed:34724258). Acts as a regulator of inflammatory response by mediating palmitoylation of NLRP3 and GSDMD (By similarity). Palmitoylates NLRP3 to promote inflammasome assembly and activation (By similarity). Activates pyroptosis by catalyzing palmitoylation of gasdermin-D (GSDMD), thereby promoting membrane translocation and pore formation of GSDMD (PubMed:38530158).</text>
</comment>
<comment type="catalytic activity">
    <reaction evidence="9 10 11">
        <text>L-cysteinyl-[protein] + hexadecanoyl-CoA = S-hexadecanoyl-L-cysteinyl-[protein] + CoA</text>
        <dbReference type="Rhea" id="RHEA:36683"/>
        <dbReference type="Rhea" id="RHEA-COMP:10131"/>
        <dbReference type="Rhea" id="RHEA-COMP:11032"/>
        <dbReference type="ChEBI" id="CHEBI:29950"/>
        <dbReference type="ChEBI" id="CHEBI:57287"/>
        <dbReference type="ChEBI" id="CHEBI:57379"/>
        <dbReference type="ChEBI" id="CHEBI:74151"/>
        <dbReference type="EC" id="2.3.1.225"/>
    </reaction>
    <physiologicalReaction direction="left-to-right" evidence="9 10 11">
        <dbReference type="Rhea" id="RHEA:36684"/>
    </physiologicalReaction>
</comment>
<comment type="interaction">
    <interactant intactId="EBI-7057556">
        <id>Q8VDZ4</id>
    </interactant>
    <interactant intactId="EBI-25635843">
        <id>Q9D428</id>
        <label>GOLGA7B</label>
    </interactant>
    <organismsDiffer>false</organismsDiffer>
    <experiments>2</experiments>
</comment>
<comment type="subcellular location">
    <subcellularLocation>
        <location evidence="8 11">Cell membrane</location>
        <topology evidence="4">Multi-pass membrane protein</topology>
    </subcellularLocation>
</comment>
<comment type="alternative products">
    <event type="alternative splicing"/>
    <isoform>
        <id>Q8VDZ4-1</id>
        <name>1</name>
        <sequence type="displayed"/>
    </isoform>
    <isoform>
        <id>Q8VDZ4-2</id>
        <name>2</name>
        <sequence type="described" ref="VSP_006936 VSP_006937"/>
    </isoform>
</comment>
<comment type="tissue specificity">
    <text evidence="7">Highly enriched in brain, detectable in liver and heart, and undetectable in most other tissues.</text>
</comment>
<comment type="induction">
    <text>In neural stem cells, rapid up-regulation by EGF, combined with FGF2 and heparin.</text>
</comment>
<comment type="domain">
    <text evidence="2">The DHHC domain is required for palmitoyltransferase activity.</text>
</comment>
<comment type="PTM">
    <text evidence="3">Phosphorylation regulates association with endocytic proteins and its subcellular localization. Phosphorylation by LYN during fatty acid uptake leads to inactivation of the activity.</text>
</comment>
<comment type="PTM">
    <text evidence="1 3">Autopalmitoylated (By similarity). Palmitoylation of the C-terminal tail regulates stimulation-dependent plasma membrane motility (By similarity).</text>
</comment>
<comment type="disruption phenotype">
    <text evidence="7 12">Deletion mutant mice are born at half the expected rate, and survivors show a marked deficit in contextual fear conditioning, an indicator of defective hippocampal-dependent learning (PubMed:20178993). Loss of ZDHHC5 in oligodendrocytes inhibits myelination and reduces the expression levels of myelin-related and anti-apoptosis genes (PubMed:34724258).</text>
</comment>
<comment type="miscellaneous">
    <text evidence="9">In neural stem cells, rapidly degraded through the proteasome pathway following growth factors withdrawal, a strategy used to induce differentiation.</text>
</comment>
<comment type="similarity">
    <text evidence="15">Belongs to the DHHC palmitoyltransferase family. ERF2/ZDHHC9 subfamily.</text>
</comment>
<comment type="sequence caution" evidence="15">
    <conflict type="erroneous initiation">
        <sequence resource="EMBL-CDS" id="BAD32529"/>
    </conflict>
    <text>Extended N-terminus.</text>
</comment>
<organism>
    <name type="scientific">Mus musculus</name>
    <name type="common">Mouse</name>
    <dbReference type="NCBI Taxonomy" id="10090"/>
    <lineage>
        <taxon>Eukaryota</taxon>
        <taxon>Metazoa</taxon>
        <taxon>Chordata</taxon>
        <taxon>Craniata</taxon>
        <taxon>Vertebrata</taxon>
        <taxon>Euteleostomi</taxon>
        <taxon>Mammalia</taxon>
        <taxon>Eutheria</taxon>
        <taxon>Euarchontoglires</taxon>
        <taxon>Glires</taxon>
        <taxon>Rodentia</taxon>
        <taxon>Myomorpha</taxon>
        <taxon>Muroidea</taxon>
        <taxon>Muridae</taxon>
        <taxon>Murinae</taxon>
        <taxon>Mus</taxon>
        <taxon>Mus</taxon>
    </lineage>
</organism>
<dbReference type="EC" id="2.3.1.225" evidence="9 10 11"/>
<dbReference type="EMBL" id="AY894891">
    <property type="protein sequence ID" value="AAX73370.1"/>
    <property type="molecule type" value="mRNA"/>
</dbReference>
<dbReference type="EMBL" id="AK082513">
    <property type="protein sequence ID" value="BAC38513.1"/>
    <property type="molecule type" value="mRNA"/>
</dbReference>
<dbReference type="EMBL" id="AK075641">
    <property type="protein sequence ID" value="BAC35875.1"/>
    <property type="molecule type" value="mRNA"/>
</dbReference>
<dbReference type="EMBL" id="AK173251">
    <property type="protein sequence ID" value="BAD32529.1"/>
    <property type="status" value="ALT_INIT"/>
    <property type="molecule type" value="mRNA"/>
</dbReference>
<dbReference type="EMBL" id="BC020051">
    <property type="protein sequence ID" value="AAH20051.1"/>
    <property type="molecule type" value="mRNA"/>
</dbReference>
<dbReference type="EMBL" id="BC027047">
    <property type="protein sequence ID" value="AAH27047.1"/>
    <property type="molecule type" value="mRNA"/>
</dbReference>
<dbReference type="EMBL" id="BC065155">
    <property type="protein sequence ID" value="AAH65155.1"/>
    <property type="molecule type" value="mRNA"/>
</dbReference>
<dbReference type="CCDS" id="CCDS16190.1">
    <molecule id="Q8VDZ4-1"/>
</dbReference>
<dbReference type="RefSeq" id="NP_659136.1">
    <molecule id="Q8VDZ4-1"/>
    <property type="nucleotide sequence ID" value="NM_144887.4"/>
</dbReference>
<dbReference type="SMR" id="Q8VDZ4"/>
<dbReference type="BioGRID" id="230716">
    <property type="interactions" value="5"/>
</dbReference>
<dbReference type="CORUM" id="Q8VDZ4"/>
<dbReference type="FunCoup" id="Q8VDZ4">
    <property type="interactions" value="1326"/>
</dbReference>
<dbReference type="IntAct" id="Q8VDZ4">
    <property type="interactions" value="3"/>
</dbReference>
<dbReference type="MINT" id="Q8VDZ4"/>
<dbReference type="STRING" id="10090.ENSMUSP00000048198"/>
<dbReference type="GlyGen" id="Q8VDZ4">
    <property type="glycosylation" value="3 sites, 1 O-linked glycan (1 site)"/>
</dbReference>
<dbReference type="iPTMnet" id="Q8VDZ4"/>
<dbReference type="PhosphoSitePlus" id="Q8VDZ4"/>
<dbReference type="SwissPalm" id="Q8VDZ4"/>
<dbReference type="jPOST" id="Q8VDZ4"/>
<dbReference type="PaxDb" id="10090-ENSMUSP00000048198"/>
<dbReference type="PeptideAtlas" id="Q8VDZ4"/>
<dbReference type="ProteomicsDB" id="275140">
    <molecule id="Q8VDZ4-1"/>
</dbReference>
<dbReference type="ProteomicsDB" id="275141">
    <molecule id="Q8VDZ4-2"/>
</dbReference>
<dbReference type="Pumba" id="Q8VDZ4"/>
<dbReference type="Antibodypedia" id="3027">
    <property type="antibodies" value="95 antibodies from 22 providers"/>
</dbReference>
<dbReference type="DNASU" id="228136"/>
<dbReference type="Ensembl" id="ENSMUST00000035840.6">
    <molecule id="Q8VDZ4-1"/>
    <property type="protein sequence ID" value="ENSMUSP00000048198.6"/>
    <property type="gene ID" value="ENSMUSG00000034075.11"/>
</dbReference>
<dbReference type="GeneID" id="228136"/>
<dbReference type="KEGG" id="mmu:228136"/>
<dbReference type="UCSC" id="uc008kiz.2">
    <molecule id="Q8VDZ4-1"/>
    <property type="organism name" value="mouse"/>
</dbReference>
<dbReference type="AGR" id="MGI:1923573"/>
<dbReference type="CTD" id="25921"/>
<dbReference type="MGI" id="MGI:1923573">
    <property type="gene designation" value="Zdhhc5"/>
</dbReference>
<dbReference type="VEuPathDB" id="HostDB:ENSMUSG00000034075"/>
<dbReference type="eggNOG" id="KOG1311">
    <property type="taxonomic scope" value="Eukaryota"/>
</dbReference>
<dbReference type="GeneTree" id="ENSGT00940000156001"/>
<dbReference type="HOGENOM" id="CLU_013779_0_0_1"/>
<dbReference type="InParanoid" id="Q8VDZ4"/>
<dbReference type="OMA" id="KMTRGES"/>
<dbReference type="OrthoDB" id="4096362at2759"/>
<dbReference type="PhylomeDB" id="Q8VDZ4"/>
<dbReference type="TreeFam" id="TF354263"/>
<dbReference type="BRENDA" id="2.3.1.225">
    <property type="organism ID" value="3474"/>
</dbReference>
<dbReference type="BioGRID-ORCS" id="228136">
    <property type="hits" value="12 hits in 80 CRISPR screens"/>
</dbReference>
<dbReference type="ChiTaRS" id="Zdhhc5">
    <property type="organism name" value="mouse"/>
</dbReference>
<dbReference type="PRO" id="PR:Q8VDZ4"/>
<dbReference type="Proteomes" id="UP000000589">
    <property type="component" value="Chromosome 2"/>
</dbReference>
<dbReference type="RNAct" id="Q8VDZ4">
    <property type="molecule type" value="protein"/>
</dbReference>
<dbReference type="Bgee" id="ENSMUSG00000034075">
    <property type="expression patterns" value="Expressed in seminiferous tubule of testis and 261 other cell types or tissues"/>
</dbReference>
<dbReference type="GO" id="GO:0030425">
    <property type="term" value="C:dendrite"/>
    <property type="evidence" value="ECO:0000314"/>
    <property type="project" value="MGI"/>
</dbReference>
<dbReference type="GO" id="GO:0098982">
    <property type="term" value="C:GABA-ergic synapse"/>
    <property type="evidence" value="ECO:0007669"/>
    <property type="project" value="Ensembl"/>
</dbReference>
<dbReference type="GO" id="GO:0098978">
    <property type="term" value="C:glutamatergic synapse"/>
    <property type="evidence" value="ECO:0000314"/>
    <property type="project" value="SynGO"/>
</dbReference>
<dbReference type="GO" id="GO:0005654">
    <property type="term" value="C:nucleoplasm"/>
    <property type="evidence" value="ECO:0007669"/>
    <property type="project" value="Ensembl"/>
</dbReference>
<dbReference type="GO" id="GO:0045335">
    <property type="term" value="C:phagocytic vesicle"/>
    <property type="evidence" value="ECO:0000314"/>
    <property type="project" value="UniProtKB"/>
</dbReference>
<dbReference type="GO" id="GO:0005886">
    <property type="term" value="C:plasma membrane"/>
    <property type="evidence" value="ECO:0000314"/>
    <property type="project" value="MGI"/>
</dbReference>
<dbReference type="GO" id="GO:0098794">
    <property type="term" value="C:postsynapse"/>
    <property type="evidence" value="ECO:0000314"/>
    <property type="project" value="SynGO"/>
</dbReference>
<dbReference type="GO" id="GO:0099091">
    <property type="term" value="C:postsynaptic specialization, intracellular component"/>
    <property type="evidence" value="ECO:0007669"/>
    <property type="project" value="Ensembl"/>
</dbReference>
<dbReference type="GO" id="GO:0016409">
    <property type="term" value="F:palmitoyltransferase activity"/>
    <property type="evidence" value="ECO:0000314"/>
    <property type="project" value="MGI"/>
</dbReference>
<dbReference type="GO" id="GO:0019706">
    <property type="term" value="F:protein-cysteine S-palmitoyltransferase activity"/>
    <property type="evidence" value="ECO:0000250"/>
    <property type="project" value="UniProtKB"/>
</dbReference>
<dbReference type="GO" id="GO:0045087">
    <property type="term" value="P:innate immune response"/>
    <property type="evidence" value="ECO:0007669"/>
    <property type="project" value="UniProtKB-KW"/>
</dbReference>
<dbReference type="GO" id="GO:0006869">
    <property type="term" value="P:lipid transport"/>
    <property type="evidence" value="ECO:0007669"/>
    <property type="project" value="UniProtKB-KW"/>
</dbReference>
<dbReference type="GO" id="GO:1900227">
    <property type="term" value="P:positive regulation of NLRP3 inflammasome complex assembly"/>
    <property type="evidence" value="ECO:0007669"/>
    <property type="project" value="Ensembl"/>
</dbReference>
<dbReference type="GO" id="GO:0062208">
    <property type="term" value="P:positive regulation of pattern recognition receptor signaling pathway"/>
    <property type="evidence" value="ECO:0000315"/>
    <property type="project" value="UniProtKB"/>
</dbReference>
<dbReference type="GO" id="GO:1905171">
    <property type="term" value="P:positive regulation of protein localization to phagocytic vesicle"/>
    <property type="evidence" value="ECO:0000315"/>
    <property type="project" value="UniProtKB"/>
</dbReference>
<dbReference type="GO" id="GO:1903078">
    <property type="term" value="P:positive regulation of protein localization to plasma membrane"/>
    <property type="evidence" value="ECO:0000315"/>
    <property type="project" value="UniProtKB"/>
</dbReference>
<dbReference type="GO" id="GO:0140639">
    <property type="term" value="P:positive regulation of pyroptotic inflammatory response"/>
    <property type="evidence" value="ECO:0000315"/>
    <property type="project" value="UniProt"/>
</dbReference>
<dbReference type="GO" id="GO:0072659">
    <property type="term" value="P:protein localization to plasma membrane"/>
    <property type="evidence" value="ECO:0007669"/>
    <property type="project" value="Ensembl"/>
</dbReference>
<dbReference type="GO" id="GO:0099072">
    <property type="term" value="P:regulation of postsynaptic membrane neurotransmitter receptor levels"/>
    <property type="evidence" value="ECO:0007669"/>
    <property type="project" value="Ensembl"/>
</dbReference>
<dbReference type="InterPro" id="IPR001594">
    <property type="entry name" value="Palmitoyltrfase_DHHC"/>
</dbReference>
<dbReference type="PANTHER" id="PTHR12349">
    <property type="entry name" value="ANKYRIN REPEAT AND LEM DOMAIN-CONTAINING PROTEIN 2"/>
    <property type="match status" value="1"/>
</dbReference>
<dbReference type="PANTHER" id="PTHR12349:SF3">
    <property type="entry name" value="PALMITOYLTRANSFERASE ZDHHC5"/>
    <property type="match status" value="1"/>
</dbReference>
<dbReference type="Pfam" id="PF01529">
    <property type="entry name" value="DHHC"/>
    <property type="match status" value="1"/>
</dbReference>
<dbReference type="PROSITE" id="PS50216">
    <property type="entry name" value="DHHC"/>
    <property type="match status" value="1"/>
</dbReference>
<protein>
    <recommendedName>
        <fullName>Palmitoyltransferase ZDHHC5</fullName>
        <ecNumber evidence="9 10 11">2.3.1.225</ecNumber>
    </recommendedName>
    <alternativeName>
        <fullName>Zinc finger DHHC domain-containing protein 5</fullName>
        <shortName>DHHC-5</shortName>
    </alternativeName>
</protein>
<reference key="1">
    <citation type="submission" date="2005-01" db="EMBL/GenBank/DDBJ databases">
        <title>A superfamily of membrane-associated DHHC type zinc finger proteins.</title>
        <authorList>
            <person name="Huang C.-H."/>
            <person name="Chen Y."/>
            <person name="Ye T."/>
        </authorList>
    </citation>
    <scope>NUCLEOTIDE SEQUENCE [MRNA] (ISOFORM 1)</scope>
    <source>
        <strain>C57BL/6J</strain>
    </source>
</reference>
<reference key="2">
    <citation type="journal article" date="2005" name="Science">
        <title>The transcriptional landscape of the mammalian genome.</title>
        <authorList>
            <person name="Carninci P."/>
            <person name="Kasukawa T."/>
            <person name="Katayama S."/>
            <person name="Gough J."/>
            <person name="Frith M.C."/>
            <person name="Maeda N."/>
            <person name="Oyama R."/>
            <person name="Ravasi T."/>
            <person name="Lenhard B."/>
            <person name="Wells C."/>
            <person name="Kodzius R."/>
            <person name="Shimokawa K."/>
            <person name="Bajic V.B."/>
            <person name="Brenner S.E."/>
            <person name="Batalov S."/>
            <person name="Forrest A.R."/>
            <person name="Zavolan M."/>
            <person name="Davis M.J."/>
            <person name="Wilming L.G."/>
            <person name="Aidinis V."/>
            <person name="Allen J.E."/>
            <person name="Ambesi-Impiombato A."/>
            <person name="Apweiler R."/>
            <person name="Aturaliya R.N."/>
            <person name="Bailey T.L."/>
            <person name="Bansal M."/>
            <person name="Baxter L."/>
            <person name="Beisel K.W."/>
            <person name="Bersano T."/>
            <person name="Bono H."/>
            <person name="Chalk A.M."/>
            <person name="Chiu K.P."/>
            <person name="Choudhary V."/>
            <person name="Christoffels A."/>
            <person name="Clutterbuck D.R."/>
            <person name="Crowe M.L."/>
            <person name="Dalla E."/>
            <person name="Dalrymple B.P."/>
            <person name="de Bono B."/>
            <person name="Della Gatta G."/>
            <person name="di Bernardo D."/>
            <person name="Down T."/>
            <person name="Engstrom P."/>
            <person name="Fagiolini M."/>
            <person name="Faulkner G."/>
            <person name="Fletcher C.F."/>
            <person name="Fukushima T."/>
            <person name="Furuno M."/>
            <person name="Futaki S."/>
            <person name="Gariboldi M."/>
            <person name="Georgii-Hemming P."/>
            <person name="Gingeras T.R."/>
            <person name="Gojobori T."/>
            <person name="Green R.E."/>
            <person name="Gustincich S."/>
            <person name="Harbers M."/>
            <person name="Hayashi Y."/>
            <person name="Hensch T.K."/>
            <person name="Hirokawa N."/>
            <person name="Hill D."/>
            <person name="Huminiecki L."/>
            <person name="Iacono M."/>
            <person name="Ikeo K."/>
            <person name="Iwama A."/>
            <person name="Ishikawa T."/>
            <person name="Jakt M."/>
            <person name="Kanapin A."/>
            <person name="Katoh M."/>
            <person name="Kawasawa Y."/>
            <person name="Kelso J."/>
            <person name="Kitamura H."/>
            <person name="Kitano H."/>
            <person name="Kollias G."/>
            <person name="Krishnan S.P."/>
            <person name="Kruger A."/>
            <person name="Kummerfeld S.K."/>
            <person name="Kurochkin I.V."/>
            <person name="Lareau L.F."/>
            <person name="Lazarevic D."/>
            <person name="Lipovich L."/>
            <person name="Liu J."/>
            <person name="Liuni S."/>
            <person name="McWilliam S."/>
            <person name="Madan Babu M."/>
            <person name="Madera M."/>
            <person name="Marchionni L."/>
            <person name="Matsuda H."/>
            <person name="Matsuzawa S."/>
            <person name="Miki H."/>
            <person name="Mignone F."/>
            <person name="Miyake S."/>
            <person name="Morris K."/>
            <person name="Mottagui-Tabar S."/>
            <person name="Mulder N."/>
            <person name="Nakano N."/>
            <person name="Nakauchi H."/>
            <person name="Ng P."/>
            <person name="Nilsson R."/>
            <person name="Nishiguchi S."/>
            <person name="Nishikawa S."/>
            <person name="Nori F."/>
            <person name="Ohara O."/>
            <person name="Okazaki Y."/>
            <person name="Orlando V."/>
            <person name="Pang K.C."/>
            <person name="Pavan W.J."/>
            <person name="Pavesi G."/>
            <person name="Pesole G."/>
            <person name="Petrovsky N."/>
            <person name="Piazza S."/>
            <person name="Reed J."/>
            <person name="Reid J.F."/>
            <person name="Ring B.Z."/>
            <person name="Ringwald M."/>
            <person name="Rost B."/>
            <person name="Ruan Y."/>
            <person name="Salzberg S.L."/>
            <person name="Sandelin A."/>
            <person name="Schneider C."/>
            <person name="Schoenbach C."/>
            <person name="Sekiguchi K."/>
            <person name="Semple C.A."/>
            <person name="Seno S."/>
            <person name="Sessa L."/>
            <person name="Sheng Y."/>
            <person name="Shibata Y."/>
            <person name="Shimada H."/>
            <person name="Shimada K."/>
            <person name="Silva D."/>
            <person name="Sinclair B."/>
            <person name="Sperling S."/>
            <person name="Stupka E."/>
            <person name="Sugiura K."/>
            <person name="Sultana R."/>
            <person name="Takenaka Y."/>
            <person name="Taki K."/>
            <person name="Tammoja K."/>
            <person name="Tan S.L."/>
            <person name="Tang S."/>
            <person name="Taylor M.S."/>
            <person name="Tegner J."/>
            <person name="Teichmann S.A."/>
            <person name="Ueda H.R."/>
            <person name="van Nimwegen E."/>
            <person name="Verardo R."/>
            <person name="Wei C.L."/>
            <person name="Yagi K."/>
            <person name="Yamanishi H."/>
            <person name="Zabarovsky E."/>
            <person name="Zhu S."/>
            <person name="Zimmer A."/>
            <person name="Hide W."/>
            <person name="Bult C."/>
            <person name="Grimmond S.M."/>
            <person name="Teasdale R.D."/>
            <person name="Liu E.T."/>
            <person name="Brusic V."/>
            <person name="Quackenbush J."/>
            <person name="Wahlestedt C."/>
            <person name="Mattick J.S."/>
            <person name="Hume D.A."/>
            <person name="Kai C."/>
            <person name="Sasaki D."/>
            <person name="Tomaru Y."/>
            <person name="Fukuda S."/>
            <person name="Kanamori-Katayama M."/>
            <person name="Suzuki M."/>
            <person name="Aoki J."/>
            <person name="Arakawa T."/>
            <person name="Iida J."/>
            <person name="Imamura K."/>
            <person name="Itoh M."/>
            <person name="Kato T."/>
            <person name="Kawaji H."/>
            <person name="Kawagashira N."/>
            <person name="Kawashima T."/>
            <person name="Kojima M."/>
            <person name="Kondo S."/>
            <person name="Konno H."/>
            <person name="Nakano K."/>
            <person name="Ninomiya N."/>
            <person name="Nishio T."/>
            <person name="Okada M."/>
            <person name="Plessy C."/>
            <person name="Shibata K."/>
            <person name="Shiraki T."/>
            <person name="Suzuki S."/>
            <person name="Tagami M."/>
            <person name="Waki K."/>
            <person name="Watahiki A."/>
            <person name="Okamura-Oho Y."/>
            <person name="Suzuki H."/>
            <person name="Kawai J."/>
            <person name="Hayashizaki Y."/>
        </authorList>
    </citation>
    <scope>NUCLEOTIDE SEQUENCE [LARGE SCALE MRNA] (ISOFORMS 1 AND 2)</scope>
    <source>
        <strain>C57BL/6J</strain>
        <tissue>Cerebellum</tissue>
    </source>
</reference>
<reference key="3">
    <citation type="journal article" date="2004" name="DNA Res.">
        <title>Prediction of the coding sequences of mouse homologues of KIAA gene: IV. The complete nucleotide sequences of 500 mouse KIAA-homologous cDNAs identified by screening of terminal sequences of cDNA clones randomly sampled from size-fractionated libraries.</title>
        <authorList>
            <person name="Okazaki N."/>
            <person name="Kikuno R."/>
            <person name="Ohara R."/>
            <person name="Inamoto S."/>
            <person name="Koseki H."/>
            <person name="Hiraoka S."/>
            <person name="Saga Y."/>
            <person name="Seino S."/>
            <person name="Nishimura M."/>
            <person name="Kaisho T."/>
            <person name="Hoshino K."/>
            <person name="Kitamura H."/>
            <person name="Nagase T."/>
            <person name="Ohara O."/>
            <person name="Koga H."/>
        </authorList>
    </citation>
    <scope>NUCLEOTIDE SEQUENCE [LARGE SCALE MRNA] (ISOFORM 1)</scope>
</reference>
<reference key="4">
    <citation type="journal article" date="2004" name="Genome Res.">
        <title>The status, quality, and expansion of the NIH full-length cDNA project: the Mammalian Gene Collection (MGC).</title>
        <authorList>
            <consortium name="The MGC Project Team"/>
        </authorList>
    </citation>
    <scope>NUCLEOTIDE SEQUENCE [LARGE SCALE MRNA] (ISOFORM 1)</scope>
    <source>
        <strain>Czech II</strain>
        <strain>FVB/10</strain>
        <tissue>Brain</tissue>
        <tissue>Mammary gland</tissue>
    </source>
</reference>
<reference key="5">
    <citation type="journal article" date="2007" name="Proc. Natl. Acad. Sci. U.S.A.">
        <title>Large-scale phosphorylation analysis of mouse liver.</title>
        <authorList>
            <person name="Villen J."/>
            <person name="Beausoleil S.A."/>
            <person name="Gerber S.A."/>
            <person name="Gygi S.P."/>
        </authorList>
    </citation>
    <scope>PHOSPHORYLATION [LARGE SCALE ANALYSIS] AT SER-296; SER-299 AND SER-345</scope>
    <scope>IDENTIFICATION BY MASS SPECTROMETRY [LARGE SCALE ANALYSIS]</scope>
    <source>
        <tissue>Liver</tissue>
    </source>
</reference>
<reference key="6">
    <citation type="journal article" date="2008" name="J. Proteome Res.">
        <title>Large-scale identification and evolution indexing of tyrosine phosphorylation sites from murine brain.</title>
        <authorList>
            <person name="Ballif B.A."/>
            <person name="Carey G.R."/>
            <person name="Sunyaev S.R."/>
            <person name="Gygi S.P."/>
        </authorList>
    </citation>
    <scope>PHOSPHORYLATION [LARGE SCALE ANALYSIS] AT TYR-91</scope>
    <scope>IDENTIFICATION BY MASS SPECTROMETRY [LARGE SCALE ANALYSIS]</scope>
    <source>
        <tissue>Brain</tissue>
    </source>
</reference>
<reference key="7">
    <citation type="journal article" date="2009" name="Immunity">
        <title>The phagosomal proteome in interferon-gamma-activated macrophages.</title>
        <authorList>
            <person name="Trost M."/>
            <person name="English L."/>
            <person name="Lemieux S."/>
            <person name="Courcelles M."/>
            <person name="Desjardins M."/>
            <person name="Thibault P."/>
        </authorList>
    </citation>
    <scope>PHOSPHORYLATION [LARGE SCALE ANALYSIS] AT SER-296; SER-299; SER-380 AND SER-621</scope>
    <scope>IDENTIFICATION BY MASS SPECTROMETRY [LARGE SCALE ANALYSIS]</scope>
</reference>
<reference key="8">
    <citation type="journal article" date="2010" name="J. Biol. Chem.">
        <title>DHHC5 interacts with PDZ domain 3 of post-synaptic density-95 (PSD-95) protein and plays a role in learning and memory.</title>
        <authorList>
            <person name="Li Y."/>
            <person name="Hu J."/>
            <person name="Hoefer K."/>
            <person name="Wong A.M."/>
            <person name="Cooper J.D."/>
            <person name="Birnbaum S.G."/>
            <person name="Hammer R.E."/>
            <person name="Hofmann S.L."/>
        </authorList>
    </citation>
    <scope>FUNCTION</scope>
    <scope>DISRUPTION PHENOTYPE</scope>
    <scope>INTERACTION WITH DLG4</scope>
    <scope>TISSUE SPECIFICITY</scope>
</reference>
<reference key="9">
    <citation type="journal article" date="2010" name="Cell">
        <title>A tissue-specific atlas of mouse protein phosphorylation and expression.</title>
        <authorList>
            <person name="Huttlin E.L."/>
            <person name="Jedrychowski M.P."/>
            <person name="Elias J.E."/>
            <person name="Goswami T."/>
            <person name="Rad R."/>
            <person name="Beausoleil S.A."/>
            <person name="Villen J."/>
            <person name="Haas W."/>
            <person name="Sowa M.E."/>
            <person name="Gygi S.P."/>
        </authorList>
    </citation>
    <scope>PHOSPHORYLATION [LARGE SCALE ANALYSIS] AT THR-294; SER-296; SER-299; THR-303; SER-345; THR-348; THR-350; SER-380; SER-429; SER-432; THR-436 AND SER-621</scope>
    <scope>IDENTIFICATION BY MASS SPECTROMETRY [LARGE SCALE ANALYSIS]</scope>
    <source>
        <tissue>Brain</tissue>
        <tissue>Brown adipose tissue</tissue>
        <tissue>Heart</tissue>
        <tissue>Kidney</tissue>
        <tissue>Liver</tissue>
        <tissue>Lung</tissue>
        <tissue>Pancreas</tissue>
        <tissue>Spleen</tissue>
        <tissue>Testis</tissue>
    </source>
</reference>
<reference key="10">
    <citation type="journal article" date="2011" name="FEBS Lett.">
        <title>Somatostatin receptor 5 is palmitoylated by the interacting ZDHHC5 palmitoyltransferase.</title>
        <authorList>
            <person name="Kokkola T."/>
            <person name="Kruse C."/>
            <person name="Roy-Pogodzik E.M."/>
            <person name="Pekkinen J."/>
            <person name="Bauch C."/>
            <person name="Honck H.H."/>
            <person name="Hennemann H."/>
            <person name="Kreienkamp H.J."/>
        </authorList>
    </citation>
    <scope>FUNCTION</scope>
    <scope>SUBCELLULAR LOCATION</scope>
</reference>
<reference key="11">
    <citation type="journal article" date="2012" name="J. Biol. Chem.">
        <title>DHHC5 protein palmitoylates flotillin-2 and is rapidly degraded on induction of neuronal differentiation in cultured cells.</title>
        <authorList>
            <person name="Li Y."/>
            <person name="Martin B.R."/>
            <person name="Cravatt B.F."/>
            <person name="Hofmann S.L."/>
        </authorList>
    </citation>
    <scope>FUNCTION</scope>
    <scope>CATALYTIC ACTIVITY</scope>
    <scope>INDUCTION</scope>
    <scope>MUTAGENESIS OF CYS-134</scope>
    <scope>ACTIVE SITE</scope>
</reference>
<reference key="12">
    <citation type="journal article" date="2014" name="Mol. Cell. Proteomics">
        <title>Immunoaffinity enrichment and mass spectrometry analysis of protein methylation.</title>
        <authorList>
            <person name="Guo A."/>
            <person name="Gu H."/>
            <person name="Zhou J."/>
            <person name="Mulhern D."/>
            <person name="Wang Y."/>
            <person name="Lee K.A."/>
            <person name="Yang V."/>
            <person name="Aguiar M."/>
            <person name="Kornhauser J."/>
            <person name="Jia X."/>
            <person name="Ren J."/>
            <person name="Beausoleil S.A."/>
            <person name="Silva J.C."/>
            <person name="Vemulapalli V."/>
            <person name="Bedford M.T."/>
            <person name="Comb M.J."/>
        </authorList>
    </citation>
    <scope>METHYLATION [LARGE SCALE ANALYSIS] AT ARG-697</scope>
    <scope>IDENTIFICATION BY MASS SPECTROMETRY [LARGE SCALE ANALYSIS]</scope>
    <source>
        <tissue>Brain</tissue>
    </source>
</reference>
<reference key="13">
    <citation type="journal article" date="2014" name="Nat. Neurosci.">
        <title>Palmitoylation of delta-catenin by DHHC5 mediates activity-induced synapse plasticity.</title>
        <authorList>
            <person name="Brigidi G.S."/>
            <person name="Sun Y."/>
            <person name="Beccano-Kelly D."/>
            <person name="Pitman K."/>
            <person name="Mobasser M."/>
            <person name="Borgland S.L."/>
            <person name="Milnerwood A.J."/>
            <person name="Bamji S.X."/>
        </authorList>
    </citation>
    <scope>FUNCTION</scope>
    <scope>CATALYTIC ACTIVITY</scope>
</reference>
<reference key="14">
    <citation type="journal article" date="2019" name="Cell Rep.">
        <title>DHHC4 and DHHC5 Facilitate Fatty Acid Uptake by Palmitoylating and Targeting CD36 to the Plasma Membrane.</title>
        <authorList>
            <person name="Wang J."/>
            <person name="Hao J.W."/>
            <person name="Wang X."/>
            <person name="Guo H."/>
            <person name="Sun H.H."/>
            <person name="Lai X.Y."/>
            <person name="Liu L.Y."/>
            <person name="Zhu M."/>
            <person name="Wang H.Y."/>
            <person name="Li Y.F."/>
            <person name="Yu L.Y."/>
            <person name="Xie C."/>
            <person name="Wang H.R."/>
            <person name="Mo W."/>
            <person name="Zhou H.M."/>
            <person name="Chen S."/>
            <person name="Liang G."/>
            <person name="Zhao T.J."/>
        </authorList>
    </citation>
    <scope>FUNCTION</scope>
    <scope>SUBCELLULAR LOCATION</scope>
    <scope>CATALYTIC ACTIVITY</scope>
</reference>
<reference key="15">
    <citation type="journal article" date="2022" name="Glia">
        <title>DHHC5 facilitates oligodendrocyte development by palmitoylating and activating STAT3.</title>
        <authorList>
            <person name="Ma Y."/>
            <person name="Liu H."/>
            <person name="Ou Z."/>
            <person name="Qi C."/>
            <person name="Xing R."/>
            <person name="Wang S."/>
            <person name="Han Y."/>
            <person name="Zhao T.J."/>
            <person name="Chen Y."/>
        </authorList>
    </citation>
    <scope>FUNCTION</scope>
    <scope>DISRUPTION PHENOTYPE</scope>
    <scope>CATALYTIC ACTIVITY</scope>
</reference>
<reference key="16">
    <citation type="journal article" date="2024" name="Sci. Immunol.">
        <title>The palmitoylation of gasdermin D directs its membrane translocation and pore formation during pyroptosis.</title>
        <authorList>
            <person name="Balasubramanian A."/>
            <person name="Hsu A.Y."/>
            <person name="Ghimire L."/>
            <person name="Tahir M."/>
            <person name="Devant P."/>
            <person name="Fontana P."/>
            <person name="Du G."/>
            <person name="Liu X."/>
            <person name="Fabin D."/>
            <person name="Kambara H."/>
            <person name="Xie X."/>
            <person name="Liu F."/>
            <person name="Hasegawa T."/>
            <person name="Xu R."/>
            <person name="Yu H."/>
            <person name="Chen M."/>
            <person name="Kolakowski S."/>
            <person name="Trauger S."/>
            <person name="Larsen M.R."/>
            <person name="Wei W."/>
            <person name="Wu H."/>
            <person name="Kagan J.C."/>
            <person name="Lieberman J."/>
            <person name="Luo H.R."/>
        </authorList>
    </citation>
    <scope>FUNCTION</scope>
</reference>
<accession>Q8VDZ4</accession>
<accession>Q2TGE8</accession>
<accession>Q69ZB5</accession>
<accession>Q8R2X7</accession>
<gene>
    <name type="primary">Zdhhc5</name>
    <name type="synonym">Kiaa1748</name>
</gene>
<evidence type="ECO:0000250" key="1">
    <source>
        <dbReference type="UniProtKB" id="Q2THW7"/>
    </source>
</evidence>
<evidence type="ECO:0000250" key="2">
    <source>
        <dbReference type="UniProtKB" id="Q8IUH5"/>
    </source>
</evidence>
<evidence type="ECO:0000250" key="3">
    <source>
        <dbReference type="UniProtKB" id="Q9C0B5"/>
    </source>
</evidence>
<evidence type="ECO:0000255" key="4"/>
<evidence type="ECO:0000255" key="5">
    <source>
        <dbReference type="PROSITE-ProRule" id="PRU00067"/>
    </source>
</evidence>
<evidence type="ECO:0000256" key="6">
    <source>
        <dbReference type="SAM" id="MobiDB-lite"/>
    </source>
</evidence>
<evidence type="ECO:0000269" key="7">
    <source>
    </source>
</evidence>
<evidence type="ECO:0000269" key="8">
    <source>
    </source>
</evidence>
<evidence type="ECO:0000269" key="9">
    <source>
    </source>
</evidence>
<evidence type="ECO:0000269" key="10">
    <source>
    </source>
</evidence>
<evidence type="ECO:0000269" key="11">
    <source>
    </source>
</evidence>
<evidence type="ECO:0000269" key="12">
    <source>
    </source>
</evidence>
<evidence type="ECO:0000269" key="13">
    <source>
    </source>
</evidence>
<evidence type="ECO:0000303" key="14">
    <source>
    </source>
</evidence>
<evidence type="ECO:0000305" key="15"/>
<evidence type="ECO:0000305" key="16">
    <source>
    </source>
</evidence>
<evidence type="ECO:0007744" key="17">
    <source>
    </source>
</evidence>
<evidence type="ECO:0007744" key="18">
    <source>
    </source>
</evidence>
<evidence type="ECO:0007744" key="19">
    <source>
    </source>
</evidence>
<evidence type="ECO:0007744" key="20">
    <source>
    </source>
</evidence>
<evidence type="ECO:0007744" key="21">
    <source>
    </source>
</evidence>